<comment type="function">
    <text evidence="1">NAD-binding protein involved in the addition of a carboxymethylaminomethyl (cmnm) group at the wobble position (U34) of certain tRNAs, forming tRNA-cmnm(5)s(2)U34.</text>
</comment>
<comment type="cofactor">
    <cofactor evidence="1">
        <name>FAD</name>
        <dbReference type="ChEBI" id="CHEBI:57692"/>
    </cofactor>
</comment>
<comment type="subunit">
    <text evidence="1">Homodimer. Heterotetramer of two MnmE and two MnmG subunits.</text>
</comment>
<comment type="subcellular location">
    <subcellularLocation>
        <location evidence="1">Cytoplasm</location>
    </subcellularLocation>
</comment>
<comment type="similarity">
    <text evidence="1">Belongs to the MnmG family.</text>
</comment>
<feature type="chain" id="PRO_0000117168" description="tRNA uridine 5-carboxymethylaminomethyl modification enzyme MnmG">
    <location>
        <begin position="1"/>
        <end position="629"/>
    </location>
</feature>
<feature type="binding site" evidence="1">
    <location>
        <begin position="13"/>
        <end position="18"/>
    </location>
    <ligand>
        <name>FAD</name>
        <dbReference type="ChEBI" id="CHEBI:57692"/>
    </ligand>
</feature>
<feature type="binding site" evidence="1">
    <location>
        <position position="125"/>
    </location>
    <ligand>
        <name>FAD</name>
        <dbReference type="ChEBI" id="CHEBI:57692"/>
    </ligand>
</feature>
<feature type="binding site" evidence="1">
    <location>
        <position position="180"/>
    </location>
    <ligand>
        <name>FAD</name>
        <dbReference type="ChEBI" id="CHEBI:57692"/>
    </ligand>
</feature>
<feature type="binding site" evidence="1">
    <location>
        <begin position="273"/>
        <end position="287"/>
    </location>
    <ligand>
        <name>NAD(+)</name>
        <dbReference type="ChEBI" id="CHEBI:57540"/>
    </ligand>
</feature>
<feature type="binding site" evidence="1">
    <location>
        <position position="370"/>
    </location>
    <ligand>
        <name>FAD</name>
        <dbReference type="ChEBI" id="CHEBI:57692"/>
    </ligand>
</feature>
<protein>
    <recommendedName>
        <fullName evidence="1">tRNA uridine 5-carboxymethylaminomethyl modification enzyme MnmG</fullName>
    </recommendedName>
    <alternativeName>
        <fullName evidence="1">Glucose-inhibited division protein A</fullName>
    </alternativeName>
</protein>
<gene>
    <name evidence="1" type="primary">mnmG</name>
    <name evidence="1" type="synonym">gidA</name>
    <name type="ordered locus">SCH_3787</name>
</gene>
<name>MNMG_SALCH</name>
<dbReference type="EMBL" id="AE017220">
    <property type="protein sequence ID" value="AAX67693.1"/>
    <property type="molecule type" value="Genomic_DNA"/>
</dbReference>
<dbReference type="RefSeq" id="WP_001541174.1">
    <property type="nucleotide sequence ID" value="NC_006905.1"/>
</dbReference>
<dbReference type="SMR" id="Q57HW9"/>
<dbReference type="KEGG" id="sec:SCH_3787"/>
<dbReference type="HOGENOM" id="CLU_007831_2_2_6"/>
<dbReference type="Proteomes" id="UP000000538">
    <property type="component" value="Chromosome"/>
</dbReference>
<dbReference type="GO" id="GO:0005829">
    <property type="term" value="C:cytosol"/>
    <property type="evidence" value="ECO:0007669"/>
    <property type="project" value="TreeGrafter"/>
</dbReference>
<dbReference type="GO" id="GO:0050660">
    <property type="term" value="F:flavin adenine dinucleotide binding"/>
    <property type="evidence" value="ECO:0007669"/>
    <property type="project" value="UniProtKB-UniRule"/>
</dbReference>
<dbReference type="GO" id="GO:0030488">
    <property type="term" value="P:tRNA methylation"/>
    <property type="evidence" value="ECO:0007669"/>
    <property type="project" value="TreeGrafter"/>
</dbReference>
<dbReference type="GO" id="GO:0002098">
    <property type="term" value="P:tRNA wobble uridine modification"/>
    <property type="evidence" value="ECO:0007669"/>
    <property type="project" value="InterPro"/>
</dbReference>
<dbReference type="FunFam" id="1.10.10.1800:FF:000001">
    <property type="entry name" value="tRNA uridine 5-carboxymethylaminomethyl modification enzyme MnmG"/>
    <property type="match status" value="1"/>
</dbReference>
<dbReference type="FunFam" id="1.10.150.570:FF:000001">
    <property type="entry name" value="tRNA uridine 5-carboxymethylaminomethyl modification enzyme MnmG"/>
    <property type="match status" value="1"/>
</dbReference>
<dbReference type="FunFam" id="3.50.50.60:FF:000002">
    <property type="entry name" value="tRNA uridine 5-carboxymethylaminomethyl modification enzyme MnmG"/>
    <property type="match status" value="1"/>
</dbReference>
<dbReference type="FunFam" id="3.50.50.60:FF:000010">
    <property type="entry name" value="tRNA uridine 5-carboxymethylaminomethyl modification enzyme MnmG"/>
    <property type="match status" value="1"/>
</dbReference>
<dbReference type="Gene3D" id="3.50.50.60">
    <property type="entry name" value="FAD/NAD(P)-binding domain"/>
    <property type="match status" value="2"/>
</dbReference>
<dbReference type="Gene3D" id="1.10.150.570">
    <property type="entry name" value="GidA associated domain, C-terminal subdomain"/>
    <property type="match status" value="1"/>
</dbReference>
<dbReference type="Gene3D" id="1.10.10.1800">
    <property type="entry name" value="tRNA uridine 5-carboxymethylaminomethyl modification enzyme MnmG/GidA"/>
    <property type="match status" value="1"/>
</dbReference>
<dbReference type="HAMAP" id="MF_00129">
    <property type="entry name" value="MnmG_GidA"/>
    <property type="match status" value="1"/>
</dbReference>
<dbReference type="InterPro" id="IPR036188">
    <property type="entry name" value="FAD/NAD-bd_sf"/>
</dbReference>
<dbReference type="InterPro" id="IPR049312">
    <property type="entry name" value="GIDA_C_N"/>
</dbReference>
<dbReference type="InterPro" id="IPR004416">
    <property type="entry name" value="MnmG"/>
</dbReference>
<dbReference type="InterPro" id="IPR002218">
    <property type="entry name" value="MnmG-rel"/>
</dbReference>
<dbReference type="InterPro" id="IPR020595">
    <property type="entry name" value="MnmG-rel_CS"/>
</dbReference>
<dbReference type="InterPro" id="IPR026904">
    <property type="entry name" value="MnmG_C"/>
</dbReference>
<dbReference type="InterPro" id="IPR047001">
    <property type="entry name" value="MnmG_C_subdom"/>
</dbReference>
<dbReference type="InterPro" id="IPR044920">
    <property type="entry name" value="MnmG_C_subdom_sf"/>
</dbReference>
<dbReference type="InterPro" id="IPR040131">
    <property type="entry name" value="MnmG_N"/>
</dbReference>
<dbReference type="NCBIfam" id="TIGR00136">
    <property type="entry name" value="mnmG_gidA"/>
    <property type="match status" value="1"/>
</dbReference>
<dbReference type="PANTHER" id="PTHR11806">
    <property type="entry name" value="GLUCOSE INHIBITED DIVISION PROTEIN A"/>
    <property type="match status" value="1"/>
</dbReference>
<dbReference type="PANTHER" id="PTHR11806:SF0">
    <property type="entry name" value="PROTEIN MTO1 HOMOLOG, MITOCHONDRIAL"/>
    <property type="match status" value="1"/>
</dbReference>
<dbReference type="Pfam" id="PF01134">
    <property type="entry name" value="GIDA"/>
    <property type="match status" value="1"/>
</dbReference>
<dbReference type="Pfam" id="PF21680">
    <property type="entry name" value="GIDA_C_1st"/>
    <property type="match status" value="1"/>
</dbReference>
<dbReference type="Pfam" id="PF13932">
    <property type="entry name" value="SAM_GIDA_C"/>
    <property type="match status" value="1"/>
</dbReference>
<dbReference type="SMART" id="SM01228">
    <property type="entry name" value="GIDA_assoc_3"/>
    <property type="match status" value="1"/>
</dbReference>
<dbReference type="SUPFAM" id="SSF51905">
    <property type="entry name" value="FAD/NAD(P)-binding domain"/>
    <property type="match status" value="1"/>
</dbReference>
<dbReference type="PROSITE" id="PS01280">
    <property type="entry name" value="GIDA_1"/>
    <property type="match status" value="1"/>
</dbReference>
<dbReference type="PROSITE" id="PS01281">
    <property type="entry name" value="GIDA_2"/>
    <property type="match status" value="1"/>
</dbReference>
<accession>Q57HW9</accession>
<evidence type="ECO:0000255" key="1">
    <source>
        <dbReference type="HAMAP-Rule" id="MF_00129"/>
    </source>
</evidence>
<reference key="1">
    <citation type="journal article" date="2005" name="Nucleic Acids Res.">
        <title>The genome sequence of Salmonella enterica serovar Choleraesuis, a highly invasive and resistant zoonotic pathogen.</title>
        <authorList>
            <person name="Chiu C.-H."/>
            <person name="Tang P."/>
            <person name="Chu C."/>
            <person name="Hu S."/>
            <person name="Bao Q."/>
            <person name="Yu J."/>
            <person name="Chou Y.-Y."/>
            <person name="Wang H.-S."/>
            <person name="Lee Y.-S."/>
        </authorList>
    </citation>
    <scope>NUCLEOTIDE SEQUENCE [LARGE SCALE GENOMIC DNA]</scope>
    <source>
        <strain>SC-B67</strain>
    </source>
</reference>
<keyword id="KW-0963">Cytoplasm</keyword>
<keyword id="KW-0274">FAD</keyword>
<keyword id="KW-0285">Flavoprotein</keyword>
<keyword id="KW-0520">NAD</keyword>
<keyword id="KW-0819">tRNA processing</keyword>
<organism>
    <name type="scientific">Salmonella choleraesuis (strain SC-B67)</name>
    <dbReference type="NCBI Taxonomy" id="321314"/>
    <lineage>
        <taxon>Bacteria</taxon>
        <taxon>Pseudomonadati</taxon>
        <taxon>Pseudomonadota</taxon>
        <taxon>Gammaproteobacteria</taxon>
        <taxon>Enterobacterales</taxon>
        <taxon>Enterobacteriaceae</taxon>
        <taxon>Salmonella</taxon>
    </lineage>
</organism>
<sequence length="629" mass="69668">MFYQDPFDVIIIGGGHAGTEAAMAAARMGQQTLLLTHNIDTLGQMSCNPAIGGIGKGHLVKEVDALGGLMAKAIDQAGIQFRILNASKGPAVRATRAQADRVLYRQAVRTALENQPNLMIFQQAVEDLIVENDRVVGAVTQMGLKFRAKAVVLTVGTFLDGKIHIGLDNYSGGRAGDPPSIPLSRRLRELPLRVSRLKTGTPPRIDARTIDFSVLAQQHGDNPMPVFSFMGNASQHPQQVPCYITHTNEKTHDVIRNNLDRSPMYAGVIEGIGPRYCPSIEDKVMRFADRNQHQIFLEPEGLTSNEIYPNGISTSLPFDVQMQIVRSMQGMENAKIVRPGYAIEYDFFDPRDLKPTLESKFIHGLFFAGQINGTTGYEEAAAQGLLAGLNAARLSADKEGWAPARSQAYLGVLVDDLCTLGTKEPYRMFTSRAEYRLMLREDNADLRLTEMGRELGLVDDERWARFNEKLENIERERQRLKSTWVTPSAESADEVNAHLTTPLSREASGEDLLRRPEMTYAQLTSLAAFAPALEDEQAAEQVEIQVKYEGYIARQQDEIEKQLRNENTLLPATLDYRQVSGLSNEVIAKLNDHKPASIGQASRISGVTPVAISILLVWLKKQGMLRRSA</sequence>
<proteinExistence type="inferred from homology"/>